<proteinExistence type="evidence at protein level"/>
<reference key="1">
    <citation type="journal article" date="1992" name="J. Biochem.">
        <title>Isolation and characterization of a mouse protein C cDNA.</title>
        <authorList>
            <person name="Tada N."/>
            <person name="Sato M."/>
            <person name="Tsujimura A."/>
            <person name="Iwase R."/>
            <person name="Hashimoto-Gotoh T."/>
        </authorList>
    </citation>
    <scope>NUCLEOTIDE SEQUENCE [MRNA]</scope>
    <source>
        <strain>BALB/cJ</strain>
        <tissue>Liver</tissue>
    </source>
</reference>
<reference key="2">
    <citation type="journal article" date="1998" name="Thromb. Haemost.">
        <title>Nucleotide structure and characterization of the murine gene encoding anticoagulant protein C.</title>
        <authorList>
            <person name="Jalbert L.R."/>
            <person name="Rosen E.D."/>
            <person name="Lissens A."/>
            <person name="Carmeliet P."/>
            <person name="Collen D."/>
            <person name="Castellino F.J."/>
        </authorList>
    </citation>
    <scope>NUCLEOTIDE SEQUENCE [GENOMIC DNA]</scope>
    <source>
        <strain>129/SvJ</strain>
    </source>
</reference>
<reference key="3">
    <citation type="submission" date="2000-11" db="EMBL/GenBank/DDBJ databases">
        <title>Complete sequence of UC72A01.</title>
        <authorList>
            <person name="Korf I."/>
        </authorList>
    </citation>
    <scope>NUCLEOTIDE SEQUENCE</scope>
    <source>
        <strain>C57BL/6J</strain>
    </source>
</reference>
<reference key="4">
    <citation type="journal article" date="2004" name="Genome Res.">
        <title>The status, quality, and expansion of the NIH full-length cDNA project: the Mammalian Gene Collection (MGC).</title>
        <authorList>
            <consortium name="The MGC Project Team"/>
        </authorList>
    </citation>
    <scope>NUCLEOTIDE SEQUENCE [LARGE SCALE MRNA]</scope>
    <source>
        <tissue>Liver</tissue>
    </source>
</reference>
<reference key="5">
    <citation type="journal article" date="1994" name="Br. J. Haematol.">
        <title>A comparative study of partial primary structures of the catalytic region of mammalian protein C.</title>
        <authorList>
            <person name="Murakawa M."/>
            <person name="Okamura T."/>
            <person name="Kamura T."/>
            <person name="Kuroiwa M."/>
            <person name="Harada M."/>
            <person name="Niho Y."/>
        </authorList>
    </citation>
    <scope>NUCLEOTIDE SEQUENCE [GENOMIC DNA] OF 274-433</scope>
    <source>
        <strain>BALB/cJ</strain>
    </source>
</reference>
<reference key="6">
    <citation type="journal article" date="2006" name="J. Proteome Res.">
        <title>Proteome-wide characterization of N-glycosylation events by diagonal chromatography.</title>
        <authorList>
            <person name="Ghesquiere B."/>
            <person name="Van Damme J."/>
            <person name="Martens L."/>
            <person name="Vandekerckhove J."/>
            <person name="Gevaert K."/>
        </authorList>
    </citation>
    <scope>GLYCOSYLATION [LARGE SCALE ANALYSIS] AT ASN-214</scope>
    <source>
        <strain>C57BL/6J</strain>
        <tissue>Plasma</tissue>
    </source>
</reference>
<accession>P33587</accession>
<accession>O35498</accession>
<accession>Q91WN8</accession>
<accession>Q99PC6</accession>
<feature type="signal peptide" evidence="4">
    <location>
        <begin position="1"/>
        <end position="18"/>
    </location>
</feature>
<feature type="propeptide" id="PRO_0000028112" evidence="1">
    <location>
        <begin position="19"/>
        <end position="41"/>
    </location>
</feature>
<feature type="chain" id="PRO_0000028113" description="Vitamin K-dependent protein C">
    <location>
        <begin position="42"/>
        <end position="460"/>
    </location>
</feature>
<feature type="chain" id="PRO_0000028114" description="Vitamin K-dependent protein C light chain" evidence="1">
    <location>
        <begin position="42"/>
        <end position="196"/>
    </location>
</feature>
<feature type="chain" id="PRO_0000028115" description="Vitamin K-dependent protein C heavy chain" evidence="1">
    <location>
        <begin position="199"/>
        <end position="460"/>
    </location>
</feature>
<feature type="peptide" id="PRO_0000028116" description="Activation peptide" evidence="1">
    <location>
        <begin position="199"/>
        <end position="212"/>
    </location>
</feature>
<feature type="domain" description="Gla" evidence="7">
    <location>
        <begin position="42"/>
        <end position="87"/>
    </location>
</feature>
<feature type="domain" description="EGF-like 1" evidence="5">
    <location>
        <begin position="96"/>
        <end position="131"/>
    </location>
</feature>
<feature type="domain" description="EGF-like 2" evidence="5">
    <location>
        <begin position="135"/>
        <end position="175"/>
    </location>
</feature>
<feature type="domain" description="Peptidase S1" evidence="6">
    <location>
        <begin position="213"/>
        <end position="449"/>
    </location>
</feature>
<feature type="active site" description="Charge relay system">
    <location>
        <position position="253"/>
    </location>
</feature>
<feature type="active site" description="Charge relay system">
    <location>
        <position position="299"/>
    </location>
</feature>
<feature type="active site" description="Charge relay system">
    <location>
        <position position="401"/>
    </location>
</feature>
<feature type="site" description="Cleavage; by thrombin" evidence="1">
    <location>
        <begin position="212"/>
        <end position="213"/>
    </location>
</feature>
<feature type="modified residue" description="4-carboxyglutamate" evidence="2 7">
    <location>
        <position position="47"/>
    </location>
</feature>
<feature type="modified residue" description="4-carboxyglutamate" evidence="2 7">
    <location>
        <position position="48"/>
    </location>
</feature>
<feature type="modified residue" description="4-carboxyglutamate" evidence="2 7">
    <location>
        <position position="55"/>
    </location>
</feature>
<feature type="modified residue" description="4-carboxyglutamate" evidence="2 7">
    <location>
        <position position="57"/>
    </location>
</feature>
<feature type="modified residue" description="4-carboxyglutamate" evidence="2 7">
    <location>
        <position position="60"/>
    </location>
</feature>
<feature type="modified residue" description="4-carboxyglutamate" evidence="2 7">
    <location>
        <position position="61"/>
    </location>
</feature>
<feature type="modified residue" description="4-carboxyglutamate" evidence="2 7">
    <location>
        <position position="66"/>
    </location>
</feature>
<feature type="modified residue" description="4-carboxyglutamate" evidence="2 7">
    <location>
        <position position="67"/>
    </location>
</feature>
<feature type="modified residue" description="4-carboxyglutamate" evidence="2 7">
    <location>
        <position position="70"/>
    </location>
</feature>
<feature type="modified residue" description="4-carboxyglutamate" evidence="2 7">
    <location>
        <position position="76"/>
    </location>
</feature>
<feature type="modified residue" description="(3R)-3-hydroxyaspartate" evidence="1">
    <location>
        <position position="112"/>
    </location>
</feature>
<feature type="glycosylation site" description="N-linked (GlcNAc...) asparagine" evidence="8">
    <location>
        <position position="214"/>
    </location>
</feature>
<feature type="glycosylation site" description="N-linked (GlcNAc...) asparagine" evidence="4">
    <location>
        <position position="290"/>
    </location>
</feature>
<feature type="glycosylation site" description="N-linked (GlcNAc...) asparagine" evidence="4">
    <location>
        <position position="354"/>
    </location>
</feature>
<feature type="disulfide bond" evidence="1">
    <location>
        <begin position="58"/>
        <end position="63"/>
    </location>
</feature>
<feature type="disulfide bond" evidence="1">
    <location>
        <begin position="91"/>
        <end position="110"/>
    </location>
</feature>
<feature type="disulfide bond" evidence="1">
    <location>
        <begin position="100"/>
        <end position="105"/>
    </location>
</feature>
<feature type="disulfide bond" evidence="1">
    <location>
        <begin position="104"/>
        <end position="119"/>
    </location>
</feature>
<feature type="disulfide bond" evidence="1">
    <location>
        <begin position="121"/>
        <end position="130"/>
    </location>
</feature>
<feature type="disulfide bond" evidence="1">
    <location>
        <begin position="139"/>
        <end position="150"/>
    </location>
</feature>
<feature type="disulfide bond" evidence="1">
    <location>
        <begin position="146"/>
        <end position="159"/>
    </location>
</feature>
<feature type="disulfide bond" evidence="1">
    <location>
        <begin position="161"/>
        <end position="174"/>
    </location>
</feature>
<feature type="disulfide bond" description="Interchain (between light and heavy chains)" evidence="5 6 7">
    <location>
        <begin position="182"/>
        <end position="319"/>
    </location>
</feature>
<feature type="disulfide bond" evidence="1">
    <location>
        <begin position="238"/>
        <end position="254"/>
    </location>
</feature>
<feature type="disulfide bond" evidence="1">
    <location>
        <begin position="372"/>
        <end position="386"/>
    </location>
</feature>
<feature type="disulfide bond" evidence="1">
    <location>
        <begin position="397"/>
        <end position="425"/>
    </location>
</feature>
<feature type="sequence variant" description="In strain: BALB/c.">
    <original>Q</original>
    <variation>QQ</variation>
    <location>
        <position position="327"/>
    </location>
</feature>
<feature type="sequence variant" description="In strain: BALB/c.">
    <original>D</original>
    <variation>N</variation>
    <location>
        <position position="392"/>
    </location>
</feature>
<feature type="sequence conflict" description="In Ref. 3; AAK07918." evidence="9" ref="3">
    <original>F</original>
    <variation>L</variation>
    <location>
        <position position="65"/>
    </location>
</feature>
<comment type="function">
    <text evidence="3">Protein C is a vitamin K-dependent serine protease that regulates blood coagulation by inactivating factors Va and VIIIa in the presence of calcium ions and phospholipids. Exerts a protective effect on the endothelial cell barrier function.</text>
</comment>
<comment type="catalytic activity">
    <reaction>
        <text>Degradation of blood coagulation factors Va and VIIIa.</text>
        <dbReference type="EC" id="3.4.21.69"/>
    </reaction>
</comment>
<comment type="subunit">
    <text>Synthesized as a single chain precursor, which is cleaved into a light chain and a heavy chain held together by a disulfide bond. The enzyme is then activated by thrombin, which cleaves a tetradecapeptide from the amino end of the heavy chain; this reaction, which occurs at the surface of endothelial cells, is strongly promoted by thrombomodulin.</text>
</comment>
<comment type="subcellular location">
    <subcellularLocation>
        <location evidence="3">Secreted</location>
    </subcellularLocation>
    <subcellularLocation>
        <location evidence="3">Golgi apparatus</location>
    </subcellularLocation>
    <subcellularLocation>
        <location evidence="3">Endoplasmic reticulum</location>
    </subcellularLocation>
</comment>
<comment type="tissue specificity">
    <text>Plasma; synthesized in the liver.</text>
</comment>
<comment type="PTM">
    <text>The vitamin K-dependent, enzymatic carboxylation of some Glu residues allows the modified protein to bind calcium.</text>
</comment>
<comment type="PTM">
    <text evidence="1">The iron and 2-oxoglutarate dependent 3-hydroxylation of aspartate and asparagine is (R) stereospecific within EGF domains.</text>
</comment>
<comment type="miscellaneous">
    <text>Calcium also binds, with stronger affinity to another site, beyond the GLA domain. This GLA-independent binding site is necessary for the recognition of the thrombin-thrombomodulin complex.</text>
</comment>
<comment type="similarity">
    <text evidence="6">Belongs to the peptidase S1 family.</text>
</comment>
<name>PROC_MOUSE</name>
<organism>
    <name type="scientific">Mus musculus</name>
    <name type="common">Mouse</name>
    <dbReference type="NCBI Taxonomy" id="10090"/>
    <lineage>
        <taxon>Eukaryota</taxon>
        <taxon>Metazoa</taxon>
        <taxon>Chordata</taxon>
        <taxon>Craniata</taxon>
        <taxon>Vertebrata</taxon>
        <taxon>Euteleostomi</taxon>
        <taxon>Mammalia</taxon>
        <taxon>Eutheria</taxon>
        <taxon>Euarchontoglires</taxon>
        <taxon>Glires</taxon>
        <taxon>Rodentia</taxon>
        <taxon>Myomorpha</taxon>
        <taxon>Muroidea</taxon>
        <taxon>Muridae</taxon>
        <taxon>Murinae</taxon>
        <taxon>Mus</taxon>
        <taxon>Mus</taxon>
    </lineage>
</organism>
<dbReference type="EC" id="3.4.21.69"/>
<dbReference type="EMBL" id="D10445">
    <property type="protein sequence ID" value="BAA01235.1"/>
    <property type="molecule type" value="mRNA"/>
</dbReference>
<dbReference type="EMBL" id="AF034569">
    <property type="protein sequence ID" value="AAC33795.1"/>
    <property type="molecule type" value="Genomic_DNA"/>
</dbReference>
<dbReference type="EMBL" id="AF318182">
    <property type="protein sequence ID" value="AAK07918.1"/>
    <property type="molecule type" value="mRNA"/>
</dbReference>
<dbReference type="EMBL" id="BC013896">
    <property type="protein sequence ID" value="AAH13896.1"/>
    <property type="molecule type" value="mRNA"/>
</dbReference>
<dbReference type="EMBL" id="D43755">
    <property type="protein sequence ID" value="BAA07812.1"/>
    <property type="molecule type" value="Genomic_DNA"/>
</dbReference>
<dbReference type="CCDS" id="CCDS29116.1"/>
<dbReference type="PIR" id="JX0210">
    <property type="entry name" value="JX0210"/>
</dbReference>
<dbReference type="RefSeq" id="NP_001036232.1">
    <property type="nucleotide sequence ID" value="NM_001042767.3"/>
</dbReference>
<dbReference type="RefSeq" id="NP_001300867.1">
    <property type="nucleotide sequence ID" value="NM_001313938.1"/>
</dbReference>
<dbReference type="RefSeq" id="XP_011245159.1">
    <property type="nucleotide sequence ID" value="XM_011246857.2"/>
</dbReference>
<dbReference type="SMR" id="P33587"/>
<dbReference type="BioGRID" id="202390">
    <property type="interactions" value="10"/>
</dbReference>
<dbReference type="FunCoup" id="P33587">
    <property type="interactions" value="79"/>
</dbReference>
<dbReference type="STRING" id="10090.ENSMUSP00000157269"/>
<dbReference type="MEROPS" id="S01.218"/>
<dbReference type="GlyCosmos" id="P33587">
    <property type="glycosylation" value="3 sites, No reported glycans"/>
</dbReference>
<dbReference type="GlyGen" id="P33587">
    <property type="glycosylation" value="3 sites, 1 N-linked glycan (1 site)"/>
</dbReference>
<dbReference type="iPTMnet" id="P33587"/>
<dbReference type="PhosphoSitePlus" id="P33587"/>
<dbReference type="jPOST" id="P33587"/>
<dbReference type="PaxDb" id="10090-ENSMUSP00000132226"/>
<dbReference type="PeptideAtlas" id="P33587"/>
<dbReference type="ProteomicsDB" id="291744"/>
<dbReference type="DNASU" id="19123"/>
<dbReference type="Ensembl" id="ENSMUST00000171765.2">
    <property type="protein sequence ID" value="ENSMUSP00000132226.2"/>
    <property type="gene ID" value="ENSMUSG00000024386.10"/>
</dbReference>
<dbReference type="Ensembl" id="ENSMUST00000234651.2">
    <property type="protein sequence ID" value="ENSMUSP00000157269.2"/>
    <property type="gene ID" value="ENSMUSG00000024386.10"/>
</dbReference>
<dbReference type="GeneID" id="19123"/>
<dbReference type="KEGG" id="mmu:19123"/>
<dbReference type="UCSC" id="uc008eiz.1">
    <property type="organism name" value="mouse"/>
</dbReference>
<dbReference type="AGR" id="MGI:97771"/>
<dbReference type="CTD" id="5624"/>
<dbReference type="MGI" id="MGI:97771">
    <property type="gene designation" value="Proc"/>
</dbReference>
<dbReference type="VEuPathDB" id="HostDB:ENSMUSG00000024386"/>
<dbReference type="eggNOG" id="ENOG502QQ3W">
    <property type="taxonomic scope" value="Eukaryota"/>
</dbReference>
<dbReference type="GeneTree" id="ENSGT00940000154474"/>
<dbReference type="HOGENOM" id="CLU_006842_19_5_1"/>
<dbReference type="InParanoid" id="P33587"/>
<dbReference type="OMA" id="VAPHNEC"/>
<dbReference type="OrthoDB" id="9028152at2759"/>
<dbReference type="PhylomeDB" id="P33587"/>
<dbReference type="TreeFam" id="TF327329"/>
<dbReference type="BRENDA" id="3.4.21.69">
    <property type="organism ID" value="3474"/>
</dbReference>
<dbReference type="Reactome" id="R-MMU-140837">
    <property type="pathway name" value="Intrinsic Pathway of Fibrin Clot Formation"/>
</dbReference>
<dbReference type="Reactome" id="R-MMU-140875">
    <property type="pathway name" value="Common Pathway of Fibrin Clot Formation"/>
</dbReference>
<dbReference type="Reactome" id="R-MMU-159740">
    <property type="pathway name" value="Gamma-carboxylation of protein precursors"/>
</dbReference>
<dbReference type="Reactome" id="R-MMU-159763">
    <property type="pathway name" value="Transport of gamma-carboxylated protein precursors from the endoplasmic reticulum to the Golgi apparatus"/>
</dbReference>
<dbReference type="Reactome" id="R-MMU-159782">
    <property type="pathway name" value="Removal of aminoterminal propeptides from gamma-carboxylated proteins"/>
</dbReference>
<dbReference type="Reactome" id="R-MMU-202733">
    <property type="pathway name" value="Cell surface interactions at the vascular wall"/>
</dbReference>
<dbReference type="Reactome" id="R-MMU-381426">
    <property type="pathway name" value="Regulation of Insulin-like Growth Factor (IGF) transport and uptake by Insulin-like Growth Factor Binding Proteins (IGFBPs)"/>
</dbReference>
<dbReference type="Reactome" id="R-MMU-8957275">
    <property type="pathway name" value="Post-translational protein phosphorylation"/>
</dbReference>
<dbReference type="BioGRID-ORCS" id="19123">
    <property type="hits" value="2 hits in 81 CRISPR screens"/>
</dbReference>
<dbReference type="ChiTaRS" id="Proc">
    <property type="organism name" value="mouse"/>
</dbReference>
<dbReference type="PRO" id="PR:P33587"/>
<dbReference type="Proteomes" id="UP000000589">
    <property type="component" value="Chromosome 18"/>
</dbReference>
<dbReference type="RNAct" id="P33587">
    <property type="molecule type" value="protein"/>
</dbReference>
<dbReference type="Bgee" id="ENSMUSG00000024386">
    <property type="expression patterns" value="Expressed in left lobe of liver and 63 other cell types or tissues"/>
</dbReference>
<dbReference type="ExpressionAtlas" id="P33587">
    <property type="expression patterns" value="baseline and differential"/>
</dbReference>
<dbReference type="GO" id="GO:0005783">
    <property type="term" value="C:endoplasmic reticulum"/>
    <property type="evidence" value="ECO:0000250"/>
    <property type="project" value="UniProtKB"/>
</dbReference>
<dbReference type="GO" id="GO:0005576">
    <property type="term" value="C:extracellular region"/>
    <property type="evidence" value="ECO:0007669"/>
    <property type="project" value="UniProtKB-SubCell"/>
</dbReference>
<dbReference type="GO" id="GO:0005794">
    <property type="term" value="C:Golgi apparatus"/>
    <property type="evidence" value="ECO:0000250"/>
    <property type="project" value="UniProtKB"/>
</dbReference>
<dbReference type="GO" id="GO:0005509">
    <property type="term" value="F:calcium ion binding"/>
    <property type="evidence" value="ECO:0007669"/>
    <property type="project" value="InterPro"/>
</dbReference>
<dbReference type="GO" id="GO:0008233">
    <property type="term" value="F:peptidase activity"/>
    <property type="evidence" value="ECO:0000314"/>
    <property type="project" value="MGI"/>
</dbReference>
<dbReference type="GO" id="GO:0004252">
    <property type="term" value="F:serine-type endopeptidase activity"/>
    <property type="evidence" value="ECO:0000250"/>
    <property type="project" value="UniProtKB"/>
</dbReference>
<dbReference type="GO" id="GO:0007596">
    <property type="term" value="P:blood coagulation"/>
    <property type="evidence" value="ECO:0007669"/>
    <property type="project" value="UniProtKB-KW"/>
</dbReference>
<dbReference type="GO" id="GO:0001889">
    <property type="term" value="P:liver development"/>
    <property type="evidence" value="ECO:0000315"/>
    <property type="project" value="MGI"/>
</dbReference>
<dbReference type="GO" id="GO:0043066">
    <property type="term" value="P:negative regulation of apoptotic process"/>
    <property type="evidence" value="ECO:0000250"/>
    <property type="project" value="UniProtKB"/>
</dbReference>
<dbReference type="GO" id="GO:0030195">
    <property type="term" value="P:negative regulation of blood coagulation"/>
    <property type="evidence" value="ECO:0000314"/>
    <property type="project" value="MGI"/>
</dbReference>
<dbReference type="GO" id="GO:0050819">
    <property type="term" value="P:negative regulation of coagulation"/>
    <property type="evidence" value="ECO:0000250"/>
    <property type="project" value="UniProtKB"/>
</dbReference>
<dbReference type="GO" id="GO:0050728">
    <property type="term" value="P:negative regulation of inflammatory response"/>
    <property type="evidence" value="ECO:0000250"/>
    <property type="project" value="UniProtKB"/>
</dbReference>
<dbReference type="GO" id="GO:1903142">
    <property type="term" value="P:positive regulation of establishment of endothelial barrier"/>
    <property type="evidence" value="ECO:0000250"/>
    <property type="project" value="UniProtKB"/>
</dbReference>
<dbReference type="GO" id="GO:0006508">
    <property type="term" value="P:proteolysis"/>
    <property type="evidence" value="ECO:0007669"/>
    <property type="project" value="UniProtKB-KW"/>
</dbReference>
<dbReference type="GO" id="GO:0044537">
    <property type="term" value="P:regulation of circulating fibrinogen levels"/>
    <property type="evidence" value="ECO:0000315"/>
    <property type="project" value="MGI"/>
</dbReference>
<dbReference type="CDD" id="cd00054">
    <property type="entry name" value="EGF_CA"/>
    <property type="match status" value="1"/>
</dbReference>
<dbReference type="CDD" id="cd00190">
    <property type="entry name" value="Tryp_SPc"/>
    <property type="match status" value="1"/>
</dbReference>
<dbReference type="FunFam" id="2.40.10.10:FF:000365">
    <property type="match status" value="1"/>
</dbReference>
<dbReference type="FunFam" id="2.10.25.10:FF:000549">
    <property type="entry name" value="Vitamin K-dependent protein C"/>
    <property type="match status" value="1"/>
</dbReference>
<dbReference type="FunFam" id="2.10.25.10:FF:000567">
    <property type="entry name" value="Vitamin K-dependent protein C"/>
    <property type="match status" value="1"/>
</dbReference>
<dbReference type="FunFam" id="2.40.10.10:FF:000256">
    <property type="entry name" value="Vitamin K-dependent protein C"/>
    <property type="match status" value="1"/>
</dbReference>
<dbReference type="FunFam" id="4.10.740.10:FF:000001">
    <property type="entry name" value="vitamin K-dependent protein S"/>
    <property type="match status" value="1"/>
</dbReference>
<dbReference type="Gene3D" id="4.10.740.10">
    <property type="entry name" value="Coagulation Factor IX"/>
    <property type="match status" value="1"/>
</dbReference>
<dbReference type="Gene3D" id="2.10.25.10">
    <property type="entry name" value="Laminin"/>
    <property type="match status" value="2"/>
</dbReference>
<dbReference type="Gene3D" id="2.40.10.10">
    <property type="entry name" value="Trypsin-like serine proteases"/>
    <property type="match status" value="2"/>
</dbReference>
<dbReference type="InterPro" id="IPR017857">
    <property type="entry name" value="Coagulation_fac-like_Gla_dom"/>
</dbReference>
<dbReference type="InterPro" id="IPR001881">
    <property type="entry name" value="EGF-like_Ca-bd_dom"/>
</dbReference>
<dbReference type="InterPro" id="IPR000742">
    <property type="entry name" value="EGF-like_dom"/>
</dbReference>
<dbReference type="InterPro" id="IPR000152">
    <property type="entry name" value="EGF-type_Asp/Asn_hydroxyl_site"/>
</dbReference>
<dbReference type="InterPro" id="IPR018097">
    <property type="entry name" value="EGF_Ca-bd_CS"/>
</dbReference>
<dbReference type="InterPro" id="IPR035972">
    <property type="entry name" value="GLA-like_dom_SF"/>
</dbReference>
<dbReference type="InterPro" id="IPR000294">
    <property type="entry name" value="GLA_domain"/>
</dbReference>
<dbReference type="InterPro" id="IPR012224">
    <property type="entry name" value="Pept_S1A_FX"/>
</dbReference>
<dbReference type="InterPro" id="IPR050442">
    <property type="entry name" value="Peptidase_S1_coag_factors"/>
</dbReference>
<dbReference type="InterPro" id="IPR009003">
    <property type="entry name" value="Peptidase_S1_PA"/>
</dbReference>
<dbReference type="InterPro" id="IPR043504">
    <property type="entry name" value="Peptidase_S1_PA_chymotrypsin"/>
</dbReference>
<dbReference type="InterPro" id="IPR001314">
    <property type="entry name" value="Peptidase_S1A"/>
</dbReference>
<dbReference type="InterPro" id="IPR001254">
    <property type="entry name" value="Trypsin_dom"/>
</dbReference>
<dbReference type="InterPro" id="IPR018114">
    <property type="entry name" value="TRYPSIN_HIS"/>
</dbReference>
<dbReference type="InterPro" id="IPR033116">
    <property type="entry name" value="TRYPSIN_SER"/>
</dbReference>
<dbReference type="PANTHER" id="PTHR24278">
    <property type="entry name" value="COAGULATION FACTOR"/>
    <property type="match status" value="1"/>
</dbReference>
<dbReference type="PANTHER" id="PTHR24278:SF0">
    <property type="entry name" value="VITAMIN K-DEPENDENT PROTEIN C"/>
    <property type="match status" value="1"/>
</dbReference>
<dbReference type="Pfam" id="PF00008">
    <property type="entry name" value="EGF"/>
    <property type="match status" value="1"/>
</dbReference>
<dbReference type="Pfam" id="PF14670">
    <property type="entry name" value="FXa_inhibition"/>
    <property type="match status" value="1"/>
</dbReference>
<dbReference type="Pfam" id="PF00594">
    <property type="entry name" value="Gla"/>
    <property type="match status" value="1"/>
</dbReference>
<dbReference type="Pfam" id="PF00089">
    <property type="entry name" value="Trypsin"/>
    <property type="match status" value="1"/>
</dbReference>
<dbReference type="PIRSF" id="PIRSF001143">
    <property type="entry name" value="Factor_X"/>
    <property type="match status" value="1"/>
</dbReference>
<dbReference type="PRINTS" id="PR00722">
    <property type="entry name" value="CHYMOTRYPSIN"/>
</dbReference>
<dbReference type="PRINTS" id="PR00001">
    <property type="entry name" value="GLABLOOD"/>
</dbReference>
<dbReference type="SMART" id="SM00181">
    <property type="entry name" value="EGF"/>
    <property type="match status" value="2"/>
</dbReference>
<dbReference type="SMART" id="SM00179">
    <property type="entry name" value="EGF_CA"/>
    <property type="match status" value="2"/>
</dbReference>
<dbReference type="SMART" id="SM00069">
    <property type="entry name" value="GLA"/>
    <property type="match status" value="1"/>
</dbReference>
<dbReference type="SMART" id="SM00020">
    <property type="entry name" value="Tryp_SPc"/>
    <property type="match status" value="1"/>
</dbReference>
<dbReference type="SUPFAM" id="SSF57196">
    <property type="entry name" value="EGF/Laminin"/>
    <property type="match status" value="2"/>
</dbReference>
<dbReference type="SUPFAM" id="SSF57630">
    <property type="entry name" value="GLA-domain"/>
    <property type="match status" value="1"/>
</dbReference>
<dbReference type="SUPFAM" id="SSF50494">
    <property type="entry name" value="Trypsin-like serine proteases"/>
    <property type="match status" value="1"/>
</dbReference>
<dbReference type="PROSITE" id="PS00010">
    <property type="entry name" value="ASX_HYDROXYL"/>
    <property type="match status" value="1"/>
</dbReference>
<dbReference type="PROSITE" id="PS00022">
    <property type="entry name" value="EGF_1"/>
    <property type="match status" value="1"/>
</dbReference>
<dbReference type="PROSITE" id="PS01186">
    <property type="entry name" value="EGF_2"/>
    <property type="match status" value="2"/>
</dbReference>
<dbReference type="PROSITE" id="PS50026">
    <property type="entry name" value="EGF_3"/>
    <property type="match status" value="1"/>
</dbReference>
<dbReference type="PROSITE" id="PS01187">
    <property type="entry name" value="EGF_CA"/>
    <property type="match status" value="1"/>
</dbReference>
<dbReference type="PROSITE" id="PS00011">
    <property type="entry name" value="GLA_1"/>
    <property type="match status" value="1"/>
</dbReference>
<dbReference type="PROSITE" id="PS50998">
    <property type="entry name" value="GLA_2"/>
    <property type="match status" value="1"/>
</dbReference>
<dbReference type="PROSITE" id="PS50240">
    <property type="entry name" value="TRYPSIN_DOM"/>
    <property type="match status" value="1"/>
</dbReference>
<dbReference type="PROSITE" id="PS00134">
    <property type="entry name" value="TRYPSIN_HIS"/>
    <property type="match status" value="1"/>
</dbReference>
<dbReference type="PROSITE" id="PS00135">
    <property type="entry name" value="TRYPSIN_SER"/>
    <property type="match status" value="1"/>
</dbReference>
<gene>
    <name type="primary">Proc</name>
</gene>
<protein>
    <recommendedName>
        <fullName>Vitamin K-dependent protein C</fullName>
        <ecNumber>3.4.21.69</ecNumber>
    </recommendedName>
    <alternativeName>
        <fullName>Anticoagulant protein C</fullName>
    </alternativeName>
    <alternativeName>
        <fullName>Autoprothrombin IIA</fullName>
    </alternativeName>
    <alternativeName>
        <fullName>Blood coagulation factor XIV</fullName>
    </alternativeName>
    <component>
        <recommendedName>
            <fullName>Vitamin K-dependent protein C light chain</fullName>
        </recommendedName>
    </component>
    <component>
        <recommendedName>
            <fullName>Vitamin K-dependent protein C heavy chain</fullName>
        </recommendedName>
    </component>
    <component>
        <recommendedName>
            <fullName>Activation peptide</fullName>
        </recommendedName>
    </component>
</protein>
<sequence length="460" mass="51818">MWQFRVFLLLMSTWGISSIPAHPDPVFSSSEHAHQVLRVRRANSFLEEMRPGSLERECMEEICDFEEAQEIFQNVEDTLAFWIKYFDGDQCSAPPLDHQCDSPCCGHGTCIDGIGSFSCSCDKGWEGKFCQQELRFQDCRVNNGGCLHYCLEESNGRRCACAPGYELADDHMRCKSTVNFPCGKLGRWIEKKRKILKRDTDLEDELEPDPRIVNGTLTKQGDSPWQAILLDSKKKLACGGVLIHTSWVLTAAHCVEGTKKLTVRLGEYDLRRRDHWELDLDIKEILVHPNYTRSSSDNDIALLRLAQPATLSKTIVPICLPNNGLAQELTQAGQETVVTGWGYQSDRIKDGRRNRTFILTFIRIPLVARNECVEVMKNVVSENMLCAGIIGDTRDACDGDSGGPMVVFFRGTWFLVGLVSWGEGCGHTNNYGIYTKVGSYLKWIHSYIGEKGVSLKSQKL</sequence>
<keyword id="KW-0094">Blood coagulation</keyword>
<keyword id="KW-0106">Calcium</keyword>
<keyword id="KW-0165">Cleavage on pair of basic residues</keyword>
<keyword id="KW-1015">Disulfide bond</keyword>
<keyword id="KW-0245">EGF-like domain</keyword>
<keyword id="KW-0256">Endoplasmic reticulum</keyword>
<keyword id="KW-0301">Gamma-carboxyglutamic acid</keyword>
<keyword id="KW-0325">Glycoprotein</keyword>
<keyword id="KW-0333">Golgi apparatus</keyword>
<keyword id="KW-0356">Hemostasis</keyword>
<keyword id="KW-0378">Hydrolase</keyword>
<keyword id="KW-0379">Hydroxylation</keyword>
<keyword id="KW-0645">Protease</keyword>
<keyword id="KW-1185">Reference proteome</keyword>
<keyword id="KW-0677">Repeat</keyword>
<keyword id="KW-0964">Secreted</keyword>
<keyword id="KW-0720">Serine protease</keyword>
<keyword id="KW-0732">Signal</keyword>
<keyword id="KW-0865">Zymogen</keyword>
<evidence type="ECO:0000250" key="1"/>
<evidence type="ECO:0000250" key="2">
    <source>
        <dbReference type="UniProtKB" id="P00745"/>
    </source>
</evidence>
<evidence type="ECO:0000250" key="3">
    <source>
        <dbReference type="UniProtKB" id="P04070"/>
    </source>
</evidence>
<evidence type="ECO:0000255" key="4"/>
<evidence type="ECO:0000255" key="5">
    <source>
        <dbReference type="PROSITE-ProRule" id="PRU00076"/>
    </source>
</evidence>
<evidence type="ECO:0000255" key="6">
    <source>
        <dbReference type="PROSITE-ProRule" id="PRU00274"/>
    </source>
</evidence>
<evidence type="ECO:0000255" key="7">
    <source>
        <dbReference type="PROSITE-ProRule" id="PRU00463"/>
    </source>
</evidence>
<evidence type="ECO:0000269" key="8">
    <source>
    </source>
</evidence>
<evidence type="ECO:0000305" key="9"/>